<feature type="chain" id="PRO_0000214634" description="Ion-translocating oxidoreductase complex subunit G">
    <location>
        <begin position="1"/>
        <end position="206"/>
    </location>
</feature>
<feature type="transmembrane region" description="Helical" evidence="1">
    <location>
        <begin position="9"/>
        <end position="29"/>
    </location>
</feature>
<feature type="modified residue" description="FMN phosphoryl threonine" evidence="1">
    <location>
        <position position="174"/>
    </location>
</feature>
<gene>
    <name evidence="1" type="primary">rsxG</name>
    <name type="ordered locus">Z2640</name>
    <name type="ordered locus">ECs2340</name>
</gene>
<keyword id="KW-0997">Cell inner membrane</keyword>
<keyword id="KW-1003">Cell membrane</keyword>
<keyword id="KW-0249">Electron transport</keyword>
<keyword id="KW-0285">Flavoprotein</keyword>
<keyword id="KW-0288">FMN</keyword>
<keyword id="KW-0472">Membrane</keyword>
<keyword id="KW-0597">Phosphoprotein</keyword>
<keyword id="KW-1185">Reference proteome</keyword>
<keyword id="KW-1278">Translocase</keyword>
<keyword id="KW-0812">Transmembrane</keyword>
<keyword id="KW-1133">Transmembrane helix</keyword>
<keyword id="KW-0813">Transport</keyword>
<accession>P58345</accession>
<reference key="1">
    <citation type="journal article" date="2001" name="Nature">
        <title>Genome sequence of enterohaemorrhagic Escherichia coli O157:H7.</title>
        <authorList>
            <person name="Perna N.T."/>
            <person name="Plunkett G. III"/>
            <person name="Burland V."/>
            <person name="Mau B."/>
            <person name="Glasner J.D."/>
            <person name="Rose D.J."/>
            <person name="Mayhew G.F."/>
            <person name="Evans P.S."/>
            <person name="Gregor J."/>
            <person name="Kirkpatrick H.A."/>
            <person name="Posfai G."/>
            <person name="Hackett J."/>
            <person name="Klink S."/>
            <person name="Boutin A."/>
            <person name="Shao Y."/>
            <person name="Miller L."/>
            <person name="Grotbeck E.J."/>
            <person name="Davis N.W."/>
            <person name="Lim A."/>
            <person name="Dimalanta E.T."/>
            <person name="Potamousis K."/>
            <person name="Apodaca J."/>
            <person name="Anantharaman T.S."/>
            <person name="Lin J."/>
            <person name="Yen G."/>
            <person name="Schwartz D.C."/>
            <person name="Welch R.A."/>
            <person name="Blattner F.R."/>
        </authorList>
    </citation>
    <scope>NUCLEOTIDE SEQUENCE [LARGE SCALE GENOMIC DNA]</scope>
    <source>
        <strain>O157:H7 / EDL933 / ATCC 700927 / EHEC</strain>
    </source>
</reference>
<reference key="2">
    <citation type="journal article" date="2001" name="DNA Res.">
        <title>Complete genome sequence of enterohemorrhagic Escherichia coli O157:H7 and genomic comparison with a laboratory strain K-12.</title>
        <authorList>
            <person name="Hayashi T."/>
            <person name="Makino K."/>
            <person name="Ohnishi M."/>
            <person name="Kurokawa K."/>
            <person name="Ishii K."/>
            <person name="Yokoyama K."/>
            <person name="Han C.-G."/>
            <person name="Ohtsubo E."/>
            <person name="Nakayama K."/>
            <person name="Murata T."/>
            <person name="Tanaka M."/>
            <person name="Tobe T."/>
            <person name="Iida T."/>
            <person name="Takami H."/>
            <person name="Honda T."/>
            <person name="Sasakawa C."/>
            <person name="Ogasawara N."/>
            <person name="Yasunaga T."/>
            <person name="Kuhara S."/>
            <person name="Shiba T."/>
            <person name="Hattori M."/>
            <person name="Shinagawa H."/>
        </authorList>
    </citation>
    <scope>NUCLEOTIDE SEQUENCE [LARGE SCALE GENOMIC DNA]</scope>
    <source>
        <strain>O157:H7 / Sakai / RIMD 0509952 / EHEC</strain>
    </source>
</reference>
<name>RSXG_ECO57</name>
<protein>
    <recommendedName>
        <fullName evidence="1">Ion-translocating oxidoreductase complex subunit G</fullName>
        <ecNumber evidence="1">7.-.-.-</ecNumber>
    </recommendedName>
    <alternativeName>
        <fullName evidence="1">Rsx electron transport complex subunit G</fullName>
    </alternativeName>
</protein>
<comment type="function">
    <text evidence="1">Part of a membrane-bound complex that couples electron transfer with translocation of ions across the membrane. Required to maintain the reduced state of SoxR.</text>
</comment>
<comment type="cofactor">
    <cofactor evidence="1">
        <name>FMN</name>
        <dbReference type="ChEBI" id="CHEBI:58210"/>
    </cofactor>
</comment>
<comment type="subunit">
    <text evidence="1">The complex is composed of six subunits: RsxA, RsxB, RsxC, RsxD, RsxE and RsxG.</text>
</comment>
<comment type="subcellular location">
    <subcellularLocation>
        <location evidence="1">Cell inner membrane</location>
        <topology evidence="1">Single-pass membrane protein</topology>
    </subcellularLocation>
</comment>
<comment type="similarity">
    <text evidence="1">Belongs to the RnfG family.</text>
</comment>
<dbReference type="EC" id="7.-.-.-" evidence="1"/>
<dbReference type="EMBL" id="AE005174">
    <property type="protein sequence ID" value="AAG56620.1"/>
    <property type="molecule type" value="Genomic_DNA"/>
</dbReference>
<dbReference type="EMBL" id="BA000007">
    <property type="protein sequence ID" value="BAB35763.1"/>
    <property type="molecule type" value="Genomic_DNA"/>
</dbReference>
<dbReference type="PIR" id="D90921">
    <property type="entry name" value="D90921"/>
</dbReference>
<dbReference type="PIR" id="H85769">
    <property type="entry name" value="H85769"/>
</dbReference>
<dbReference type="RefSeq" id="NP_310367.1">
    <property type="nucleotide sequence ID" value="NC_002695.1"/>
</dbReference>
<dbReference type="RefSeq" id="WP_000920789.1">
    <property type="nucleotide sequence ID" value="NZ_VOAI01000007.1"/>
</dbReference>
<dbReference type="SMR" id="P58345"/>
<dbReference type="STRING" id="155864.Z2640"/>
<dbReference type="GeneID" id="914445"/>
<dbReference type="KEGG" id="ece:Z2640"/>
<dbReference type="KEGG" id="ecs:ECs_2340"/>
<dbReference type="PATRIC" id="fig|386585.9.peg.2449"/>
<dbReference type="eggNOG" id="COG4659">
    <property type="taxonomic scope" value="Bacteria"/>
</dbReference>
<dbReference type="HOGENOM" id="CLU_077882_1_0_6"/>
<dbReference type="OMA" id="YSGAIHL"/>
<dbReference type="Proteomes" id="UP000000558">
    <property type="component" value="Chromosome"/>
</dbReference>
<dbReference type="Proteomes" id="UP000002519">
    <property type="component" value="Chromosome"/>
</dbReference>
<dbReference type="GO" id="GO:0005886">
    <property type="term" value="C:plasma membrane"/>
    <property type="evidence" value="ECO:0007669"/>
    <property type="project" value="UniProtKB-SubCell"/>
</dbReference>
<dbReference type="GO" id="GO:0009055">
    <property type="term" value="F:electron transfer activity"/>
    <property type="evidence" value="ECO:0007669"/>
    <property type="project" value="InterPro"/>
</dbReference>
<dbReference type="GO" id="GO:0010181">
    <property type="term" value="F:FMN binding"/>
    <property type="evidence" value="ECO:0007669"/>
    <property type="project" value="InterPro"/>
</dbReference>
<dbReference type="GO" id="GO:0022900">
    <property type="term" value="P:electron transport chain"/>
    <property type="evidence" value="ECO:0007669"/>
    <property type="project" value="UniProtKB-UniRule"/>
</dbReference>
<dbReference type="HAMAP" id="MF_00479">
    <property type="entry name" value="RsxG_RnfG"/>
    <property type="match status" value="1"/>
</dbReference>
<dbReference type="InterPro" id="IPR007329">
    <property type="entry name" value="FMN-bd"/>
</dbReference>
<dbReference type="InterPro" id="IPR010209">
    <property type="entry name" value="Ion_transpt_RnfG/RsxG"/>
</dbReference>
<dbReference type="NCBIfam" id="NF002519">
    <property type="entry name" value="PRK01908.1"/>
    <property type="match status" value="1"/>
</dbReference>
<dbReference type="NCBIfam" id="TIGR01947">
    <property type="entry name" value="rnfG"/>
    <property type="match status" value="1"/>
</dbReference>
<dbReference type="PANTHER" id="PTHR36118">
    <property type="entry name" value="ION-TRANSLOCATING OXIDOREDUCTASE COMPLEX SUBUNIT G"/>
    <property type="match status" value="1"/>
</dbReference>
<dbReference type="PANTHER" id="PTHR36118:SF1">
    <property type="entry name" value="ION-TRANSLOCATING OXIDOREDUCTASE COMPLEX SUBUNIT G"/>
    <property type="match status" value="1"/>
</dbReference>
<dbReference type="Pfam" id="PF04205">
    <property type="entry name" value="FMN_bind"/>
    <property type="match status" value="1"/>
</dbReference>
<dbReference type="PIRSF" id="PIRSF006091">
    <property type="entry name" value="E_trnsport_RnfG"/>
    <property type="match status" value="1"/>
</dbReference>
<dbReference type="SMART" id="SM00900">
    <property type="entry name" value="FMN_bind"/>
    <property type="match status" value="1"/>
</dbReference>
<sequence>MLKTIRKHGITLALFAAGSTGLTAAINQMTKTTIAEQASLQQKALFDQVLPAERYNNALAQSCYLVTAPELGKGEHRVYIAKQDDKPVAAVLEATAPDGYSGAIQLLVGADFNGTVLGTRVTEHHETPGLGDKIELRLSDWITHFAGKKISGADDAHWAVKKDGGNFDQFTGATITPRAVVNAVKRAGLYAQTLPEQLSQLPACGE</sequence>
<proteinExistence type="inferred from homology"/>
<organism>
    <name type="scientific">Escherichia coli O157:H7</name>
    <dbReference type="NCBI Taxonomy" id="83334"/>
    <lineage>
        <taxon>Bacteria</taxon>
        <taxon>Pseudomonadati</taxon>
        <taxon>Pseudomonadota</taxon>
        <taxon>Gammaproteobacteria</taxon>
        <taxon>Enterobacterales</taxon>
        <taxon>Enterobacteriaceae</taxon>
        <taxon>Escherichia</taxon>
    </lineage>
</organism>
<evidence type="ECO:0000255" key="1">
    <source>
        <dbReference type="HAMAP-Rule" id="MF_00479"/>
    </source>
</evidence>